<organism>
    <name type="scientific">Escherichia coli O139:H28 (strain E24377A / ETEC)</name>
    <dbReference type="NCBI Taxonomy" id="331111"/>
    <lineage>
        <taxon>Bacteria</taxon>
        <taxon>Pseudomonadati</taxon>
        <taxon>Pseudomonadota</taxon>
        <taxon>Gammaproteobacteria</taxon>
        <taxon>Enterobacterales</taxon>
        <taxon>Enterobacteriaceae</taxon>
        <taxon>Escherichia</taxon>
    </lineage>
</organism>
<evidence type="ECO:0000255" key="1">
    <source>
        <dbReference type="HAMAP-Rule" id="MF_01069"/>
    </source>
</evidence>
<name>OPGG_ECO24</name>
<gene>
    <name evidence="1" type="primary">mdoG</name>
    <name evidence="1" type="synonym">opgG</name>
    <name type="ordered locus">EcE24377A_1169</name>
</gene>
<sequence length="511" mass="57882">MMKMRWLSAAVMLTLYTSSSWAFSIDDVAKQAQSLAGKGYEAPKSNLPSVFRDMKYADYQQIQFNHDKAYWNNLKTPFKLEFYHQGMYFDTPVKINEVTATAVKRIKYSPDYFTFGDVQHDKDTVKDLGFAGFKVLYPINSKDKNDEIVSMLGASYFRVIGAGQVYGLSARGLAIDTALPSGEEFPRFKEFWIERPKPTDKRLTIYALLDSPRATGAYKFVVMPGRDTVVDVQSKIYLRDKVGKLGVAPLTSMFLFGPNQPSPANNYRPELHDSNGLSIHAGNGEWIWRPLNNPKHLAVSSFSMENPQGFGLLQRGRDFSRFEDLDDRYDLRPSAWVTPKGEWGKGSVELVEIPTNDETNDNIVAYWTPDQLPEPGKEMNFKYTITFSRDEDKLHAPDNAWVQQTRRSTGDVKQSNLIRQPDGTIAFVVDFTGAEMKKLPEDTPVTAQTSIGDNGEIVESTVRYNPVTKGWRLVMRVKVKDAKKTTEMRAALVNADQTLSETWSYQLPANE</sequence>
<keyword id="KW-0574">Periplasm</keyword>
<keyword id="KW-1185">Reference proteome</keyword>
<keyword id="KW-0732">Signal</keyword>
<protein>
    <recommendedName>
        <fullName evidence="1">Glucans biosynthesis protein G</fullName>
    </recommendedName>
</protein>
<accession>A7ZKF2</accession>
<reference key="1">
    <citation type="journal article" date="2008" name="J. Bacteriol.">
        <title>The pangenome structure of Escherichia coli: comparative genomic analysis of E. coli commensal and pathogenic isolates.</title>
        <authorList>
            <person name="Rasko D.A."/>
            <person name="Rosovitz M.J."/>
            <person name="Myers G.S.A."/>
            <person name="Mongodin E.F."/>
            <person name="Fricke W.F."/>
            <person name="Gajer P."/>
            <person name="Crabtree J."/>
            <person name="Sebaihia M."/>
            <person name="Thomson N.R."/>
            <person name="Chaudhuri R."/>
            <person name="Henderson I.R."/>
            <person name="Sperandio V."/>
            <person name="Ravel J."/>
        </authorList>
    </citation>
    <scope>NUCLEOTIDE SEQUENCE [LARGE SCALE GENOMIC DNA]</scope>
    <source>
        <strain>E24377A / ETEC</strain>
    </source>
</reference>
<comment type="function">
    <text evidence="1">Involved in the biosynthesis of osmoregulated periplasmic glucans (OPGs).</text>
</comment>
<comment type="pathway">
    <text evidence="1">Glycan metabolism; osmoregulated periplasmic glucan (OPG) biosynthesis.</text>
</comment>
<comment type="subcellular location">
    <subcellularLocation>
        <location evidence="1">Periplasm</location>
    </subcellularLocation>
</comment>
<comment type="similarity">
    <text evidence="1">Belongs to the OpgD/OpgG family.</text>
</comment>
<dbReference type="EMBL" id="CP000800">
    <property type="protein sequence ID" value="ABV18502.1"/>
    <property type="molecule type" value="Genomic_DNA"/>
</dbReference>
<dbReference type="RefSeq" id="WP_001300662.1">
    <property type="nucleotide sequence ID" value="NC_009801.1"/>
</dbReference>
<dbReference type="SMR" id="A7ZKF2"/>
<dbReference type="GeneID" id="93776366"/>
<dbReference type="KEGG" id="ecw:EcE24377A_1169"/>
<dbReference type="HOGENOM" id="CLU_023403_2_0_6"/>
<dbReference type="UniPathway" id="UPA00637"/>
<dbReference type="Proteomes" id="UP000001122">
    <property type="component" value="Chromosome"/>
</dbReference>
<dbReference type="GO" id="GO:0030288">
    <property type="term" value="C:outer membrane-bounded periplasmic space"/>
    <property type="evidence" value="ECO:0007669"/>
    <property type="project" value="TreeGrafter"/>
</dbReference>
<dbReference type="GO" id="GO:0030246">
    <property type="term" value="F:carbohydrate binding"/>
    <property type="evidence" value="ECO:0007669"/>
    <property type="project" value="InterPro"/>
</dbReference>
<dbReference type="GO" id="GO:0003824">
    <property type="term" value="F:catalytic activity"/>
    <property type="evidence" value="ECO:0007669"/>
    <property type="project" value="InterPro"/>
</dbReference>
<dbReference type="GO" id="GO:0051274">
    <property type="term" value="P:beta-glucan biosynthetic process"/>
    <property type="evidence" value="ECO:0007669"/>
    <property type="project" value="TreeGrafter"/>
</dbReference>
<dbReference type="FunFam" id="2.60.40.10:FF:000294">
    <property type="entry name" value="Glucans biosynthesis protein G"/>
    <property type="match status" value="1"/>
</dbReference>
<dbReference type="FunFam" id="2.70.98.10:FF:000001">
    <property type="entry name" value="Glucans biosynthesis protein G"/>
    <property type="match status" value="1"/>
</dbReference>
<dbReference type="Gene3D" id="2.70.98.10">
    <property type="match status" value="1"/>
</dbReference>
<dbReference type="Gene3D" id="2.60.40.10">
    <property type="entry name" value="Immunoglobulins"/>
    <property type="match status" value="1"/>
</dbReference>
<dbReference type="HAMAP" id="MF_01069">
    <property type="entry name" value="MdoG_OpgG"/>
    <property type="match status" value="1"/>
</dbReference>
<dbReference type="InterPro" id="IPR011013">
    <property type="entry name" value="Gal_mutarotase_sf_dom"/>
</dbReference>
<dbReference type="InterPro" id="IPR014718">
    <property type="entry name" value="GH-type_carb-bd"/>
</dbReference>
<dbReference type="InterPro" id="IPR014438">
    <property type="entry name" value="Glucan_biosyn_MdoG/MdoD"/>
</dbReference>
<dbReference type="InterPro" id="IPR007444">
    <property type="entry name" value="Glucan_biosyn_MdoG_C"/>
</dbReference>
<dbReference type="InterPro" id="IPR013783">
    <property type="entry name" value="Ig-like_fold"/>
</dbReference>
<dbReference type="InterPro" id="IPR014756">
    <property type="entry name" value="Ig_E-set"/>
</dbReference>
<dbReference type="InterPro" id="IPR023704">
    <property type="entry name" value="MdoG_OpgG"/>
</dbReference>
<dbReference type="PANTHER" id="PTHR30504">
    <property type="entry name" value="GLUCANS BIOSYNTHESIS PROTEIN"/>
    <property type="match status" value="1"/>
</dbReference>
<dbReference type="PANTHER" id="PTHR30504:SF4">
    <property type="entry name" value="GLUCANS BIOSYNTHESIS PROTEIN G"/>
    <property type="match status" value="1"/>
</dbReference>
<dbReference type="Pfam" id="PF04349">
    <property type="entry name" value="MdoG"/>
    <property type="match status" value="1"/>
</dbReference>
<dbReference type="PIRSF" id="PIRSF006281">
    <property type="entry name" value="MdoG"/>
    <property type="match status" value="1"/>
</dbReference>
<dbReference type="SUPFAM" id="SSF81296">
    <property type="entry name" value="E set domains"/>
    <property type="match status" value="1"/>
</dbReference>
<dbReference type="SUPFAM" id="SSF74650">
    <property type="entry name" value="Galactose mutarotase-like"/>
    <property type="match status" value="1"/>
</dbReference>
<feature type="signal peptide" evidence="1">
    <location>
        <begin position="1"/>
        <end position="22"/>
    </location>
</feature>
<feature type="chain" id="PRO_1000064556" description="Glucans biosynthesis protein G">
    <location>
        <begin position="23"/>
        <end position="511"/>
    </location>
</feature>
<proteinExistence type="inferred from homology"/>